<accession>A5N4P7</accession>
<dbReference type="EMBL" id="CP000673">
    <property type="protein sequence ID" value="EDK32278.1"/>
    <property type="molecule type" value="Genomic_DNA"/>
</dbReference>
<dbReference type="RefSeq" id="WP_011988803.1">
    <property type="nucleotide sequence ID" value="NC_009706.1"/>
</dbReference>
<dbReference type="SMR" id="A5N4P7"/>
<dbReference type="STRING" id="431943.CKL_0224"/>
<dbReference type="KEGG" id="ckl:CKL_0224"/>
<dbReference type="eggNOG" id="COG0087">
    <property type="taxonomic scope" value="Bacteria"/>
</dbReference>
<dbReference type="HOGENOM" id="CLU_044142_4_1_9"/>
<dbReference type="Proteomes" id="UP000002411">
    <property type="component" value="Chromosome"/>
</dbReference>
<dbReference type="GO" id="GO:0022625">
    <property type="term" value="C:cytosolic large ribosomal subunit"/>
    <property type="evidence" value="ECO:0007669"/>
    <property type="project" value="TreeGrafter"/>
</dbReference>
<dbReference type="GO" id="GO:0019843">
    <property type="term" value="F:rRNA binding"/>
    <property type="evidence" value="ECO:0007669"/>
    <property type="project" value="UniProtKB-UniRule"/>
</dbReference>
<dbReference type="GO" id="GO:0003735">
    <property type="term" value="F:structural constituent of ribosome"/>
    <property type="evidence" value="ECO:0007669"/>
    <property type="project" value="InterPro"/>
</dbReference>
<dbReference type="GO" id="GO:0006412">
    <property type="term" value="P:translation"/>
    <property type="evidence" value="ECO:0007669"/>
    <property type="project" value="UniProtKB-UniRule"/>
</dbReference>
<dbReference type="FunFam" id="2.40.30.10:FF:000004">
    <property type="entry name" value="50S ribosomal protein L3"/>
    <property type="match status" value="1"/>
</dbReference>
<dbReference type="FunFam" id="3.30.160.810:FF:000001">
    <property type="entry name" value="50S ribosomal protein L3"/>
    <property type="match status" value="1"/>
</dbReference>
<dbReference type="Gene3D" id="3.30.160.810">
    <property type="match status" value="1"/>
</dbReference>
<dbReference type="Gene3D" id="2.40.30.10">
    <property type="entry name" value="Translation factors"/>
    <property type="match status" value="1"/>
</dbReference>
<dbReference type="HAMAP" id="MF_01325_B">
    <property type="entry name" value="Ribosomal_uL3_B"/>
    <property type="match status" value="1"/>
</dbReference>
<dbReference type="InterPro" id="IPR000597">
    <property type="entry name" value="Ribosomal_uL3"/>
</dbReference>
<dbReference type="InterPro" id="IPR019927">
    <property type="entry name" value="Ribosomal_uL3_bac/org-type"/>
</dbReference>
<dbReference type="InterPro" id="IPR019926">
    <property type="entry name" value="Ribosomal_uL3_CS"/>
</dbReference>
<dbReference type="InterPro" id="IPR009000">
    <property type="entry name" value="Transl_B-barrel_sf"/>
</dbReference>
<dbReference type="NCBIfam" id="TIGR03625">
    <property type="entry name" value="L3_bact"/>
    <property type="match status" value="1"/>
</dbReference>
<dbReference type="PANTHER" id="PTHR11229">
    <property type="entry name" value="50S RIBOSOMAL PROTEIN L3"/>
    <property type="match status" value="1"/>
</dbReference>
<dbReference type="PANTHER" id="PTHR11229:SF16">
    <property type="entry name" value="LARGE RIBOSOMAL SUBUNIT PROTEIN UL3C"/>
    <property type="match status" value="1"/>
</dbReference>
<dbReference type="Pfam" id="PF00297">
    <property type="entry name" value="Ribosomal_L3"/>
    <property type="match status" value="1"/>
</dbReference>
<dbReference type="SUPFAM" id="SSF50447">
    <property type="entry name" value="Translation proteins"/>
    <property type="match status" value="1"/>
</dbReference>
<dbReference type="PROSITE" id="PS00474">
    <property type="entry name" value="RIBOSOMAL_L3"/>
    <property type="match status" value="1"/>
</dbReference>
<name>RL3_CLOK5</name>
<gene>
    <name evidence="1" type="primary">rplC</name>
    <name type="ordered locus">CKL_0224</name>
</gene>
<comment type="function">
    <text evidence="1">One of the primary rRNA binding proteins, it binds directly near the 3'-end of the 23S rRNA, where it nucleates assembly of the 50S subunit.</text>
</comment>
<comment type="subunit">
    <text evidence="1">Part of the 50S ribosomal subunit. Forms a cluster with proteins L14 and L19.</text>
</comment>
<comment type="similarity">
    <text evidence="1">Belongs to the universal ribosomal protein uL3 family.</text>
</comment>
<proteinExistence type="inferred from homology"/>
<evidence type="ECO:0000255" key="1">
    <source>
        <dbReference type="HAMAP-Rule" id="MF_01325"/>
    </source>
</evidence>
<evidence type="ECO:0000256" key="2">
    <source>
        <dbReference type="SAM" id="MobiDB-lite"/>
    </source>
</evidence>
<evidence type="ECO:0000305" key="3"/>
<protein>
    <recommendedName>
        <fullName evidence="1">Large ribosomal subunit protein uL3</fullName>
    </recommendedName>
    <alternativeName>
        <fullName evidence="3">50S ribosomal protein L3</fullName>
    </alternativeName>
</protein>
<keyword id="KW-1185">Reference proteome</keyword>
<keyword id="KW-0687">Ribonucleoprotein</keyword>
<keyword id="KW-0689">Ribosomal protein</keyword>
<keyword id="KW-0694">RNA-binding</keyword>
<keyword id="KW-0699">rRNA-binding</keyword>
<organism>
    <name type="scientific">Clostridium kluyveri (strain ATCC 8527 / DSM 555 / NBRC 12016 / NCIMB 10680 / K1)</name>
    <dbReference type="NCBI Taxonomy" id="431943"/>
    <lineage>
        <taxon>Bacteria</taxon>
        <taxon>Bacillati</taxon>
        <taxon>Bacillota</taxon>
        <taxon>Clostridia</taxon>
        <taxon>Eubacteriales</taxon>
        <taxon>Clostridiaceae</taxon>
        <taxon>Clostridium</taxon>
    </lineage>
</organism>
<reference key="1">
    <citation type="journal article" date="2008" name="Proc. Natl. Acad. Sci. U.S.A.">
        <title>The genome of Clostridium kluyveri, a strict anaerobe with unique metabolic features.</title>
        <authorList>
            <person name="Seedorf H."/>
            <person name="Fricke W.F."/>
            <person name="Veith B."/>
            <person name="Brueggemann H."/>
            <person name="Liesegang H."/>
            <person name="Strittmatter A."/>
            <person name="Miethke M."/>
            <person name="Buckel W."/>
            <person name="Hinderberger J."/>
            <person name="Li F."/>
            <person name="Hagemeier C."/>
            <person name="Thauer R.K."/>
            <person name="Gottschalk G."/>
        </authorList>
    </citation>
    <scope>NUCLEOTIDE SEQUENCE [LARGE SCALE GENOMIC DNA]</scope>
    <source>
        <strain>ATCC 8527 / DSM 555 / NBRC 12016 / NCIMB 10680 / K1</strain>
    </source>
</reference>
<feature type="chain" id="PRO_1000086434" description="Large ribosomal subunit protein uL3">
    <location>
        <begin position="1"/>
        <end position="209"/>
    </location>
</feature>
<feature type="region of interest" description="Disordered" evidence="2">
    <location>
        <begin position="130"/>
        <end position="154"/>
    </location>
</feature>
<sequence length="209" mass="22905">MKKAILGKKLGMTQIFNENGRVIPVTVIEAGPCVVVQKKTEEKDGYKSIQIGFGDIREKLVNKPLKGHFAKSGVSLKRFLKEFKVDNIDEYEVGQEIKADIFAEGDRIDVSGISKGKGFQGVIRRWNAQRGPMSHGSKFHRAVGSMGASSDPSRTFKNKKMPGHMGNKNTTVLNLQVAKVIPEKNIILIKGGVPGPNKSFVSIKDTVKA</sequence>